<feature type="signal peptide" evidence="1">
    <location>
        <begin position="1"/>
        <end position="31"/>
    </location>
</feature>
<feature type="chain" id="PRO_0000387465" description="Uncharacterized protein YojO">
    <location>
        <begin position="32"/>
        <end position="638"/>
    </location>
</feature>
<feature type="domain" description="VWFA" evidence="2">
    <location>
        <begin position="445"/>
        <end position="632"/>
    </location>
</feature>
<feature type="region of interest" description="Disordered" evidence="3">
    <location>
        <begin position="247"/>
        <end position="285"/>
    </location>
</feature>
<feature type="region of interest" description="Disordered" evidence="3">
    <location>
        <begin position="301"/>
        <end position="354"/>
    </location>
</feature>
<feature type="compositionally biased region" description="Basic and acidic residues" evidence="3">
    <location>
        <begin position="247"/>
        <end position="256"/>
    </location>
</feature>
<feature type="compositionally biased region" description="Basic and acidic residues" evidence="3">
    <location>
        <begin position="273"/>
        <end position="284"/>
    </location>
</feature>
<feature type="compositionally biased region" description="Basic and acidic residues" evidence="3">
    <location>
        <begin position="301"/>
        <end position="310"/>
    </location>
</feature>
<feature type="compositionally biased region" description="Basic and acidic residues" evidence="3">
    <location>
        <begin position="329"/>
        <end position="342"/>
    </location>
</feature>
<dbReference type="EMBL" id="AF026147">
    <property type="protein sequence ID" value="AAC17863.1"/>
    <property type="status" value="ALT_INIT"/>
    <property type="molecule type" value="Genomic_DNA"/>
</dbReference>
<dbReference type="EMBL" id="AL009126">
    <property type="protein sequence ID" value="CAB13830.2"/>
    <property type="molecule type" value="Genomic_DNA"/>
</dbReference>
<dbReference type="PIR" id="D69907">
    <property type="entry name" value="D69907"/>
</dbReference>
<dbReference type="RefSeq" id="NP_389820.2">
    <property type="nucleotide sequence ID" value="NC_000964.3"/>
</dbReference>
<dbReference type="RefSeq" id="WP_004399326.1">
    <property type="nucleotide sequence ID" value="NZ_OZ025638.1"/>
</dbReference>
<dbReference type="FunCoup" id="O31849">
    <property type="interactions" value="17"/>
</dbReference>
<dbReference type="STRING" id="224308.BSU19380"/>
<dbReference type="jPOST" id="O31849"/>
<dbReference type="PaxDb" id="224308-BSU19380"/>
<dbReference type="EnsemblBacteria" id="CAB13830">
    <property type="protein sequence ID" value="CAB13830"/>
    <property type="gene ID" value="BSU_19380"/>
</dbReference>
<dbReference type="GeneID" id="939499"/>
<dbReference type="KEGG" id="bsu:BSU19380"/>
<dbReference type="PATRIC" id="fig|224308.179.peg.2119"/>
<dbReference type="eggNOG" id="COG4548">
    <property type="taxonomic scope" value="Bacteria"/>
</dbReference>
<dbReference type="InParanoid" id="O31849"/>
<dbReference type="OrthoDB" id="2370292at2"/>
<dbReference type="PhylomeDB" id="O31849"/>
<dbReference type="BioCyc" id="BSUB:BSU19380-MONOMER"/>
<dbReference type="Proteomes" id="UP000001570">
    <property type="component" value="Chromosome"/>
</dbReference>
<dbReference type="CDD" id="cd01454">
    <property type="entry name" value="vWA_norD_type"/>
    <property type="match status" value="1"/>
</dbReference>
<dbReference type="Gene3D" id="3.40.50.410">
    <property type="entry name" value="von Willebrand factor, type A domain"/>
    <property type="match status" value="1"/>
</dbReference>
<dbReference type="InterPro" id="IPR051928">
    <property type="entry name" value="NorD/CobT"/>
</dbReference>
<dbReference type="InterPro" id="IPR002035">
    <property type="entry name" value="VWF_A"/>
</dbReference>
<dbReference type="InterPro" id="IPR036465">
    <property type="entry name" value="vWFA_dom_sf"/>
</dbReference>
<dbReference type="PANTHER" id="PTHR41248">
    <property type="entry name" value="NORD PROTEIN"/>
    <property type="match status" value="1"/>
</dbReference>
<dbReference type="PANTHER" id="PTHR41248:SF1">
    <property type="entry name" value="NORD PROTEIN"/>
    <property type="match status" value="1"/>
</dbReference>
<dbReference type="Pfam" id="PF00092">
    <property type="entry name" value="VWA"/>
    <property type="match status" value="1"/>
</dbReference>
<dbReference type="SMART" id="SM00327">
    <property type="entry name" value="VWA"/>
    <property type="match status" value="1"/>
</dbReference>
<dbReference type="SUPFAM" id="SSF53300">
    <property type="entry name" value="vWA-like"/>
    <property type="match status" value="1"/>
</dbReference>
<dbReference type="PROSITE" id="PS50234">
    <property type="entry name" value="VWFA"/>
    <property type="match status" value="1"/>
</dbReference>
<organism>
    <name type="scientific">Bacillus subtilis (strain 168)</name>
    <dbReference type="NCBI Taxonomy" id="224308"/>
    <lineage>
        <taxon>Bacteria</taxon>
        <taxon>Bacillati</taxon>
        <taxon>Bacillota</taxon>
        <taxon>Bacilli</taxon>
        <taxon>Bacillales</taxon>
        <taxon>Bacillaceae</taxon>
        <taxon>Bacillus</taxon>
    </lineage>
</organism>
<gene>
    <name type="primary">yojO</name>
    <name type="ordered locus">BSU19380</name>
</gene>
<reference key="1">
    <citation type="journal article" date="1998" name="DNA Res.">
        <title>Sequence analysis of the Bacillus subtilis 168 chromosome region between the sspC and odhA loci (184 degrees-180 degrees).</title>
        <authorList>
            <person name="Ghim S.-Y."/>
            <person name="Choi S.-K."/>
            <person name="Shin B.-S."/>
            <person name="Jeong Y.-M."/>
            <person name="Sorokin A."/>
            <person name="Ehrlich S.D."/>
            <person name="Park S.-H."/>
        </authorList>
    </citation>
    <scope>NUCLEOTIDE SEQUENCE [GENOMIC DNA]</scope>
    <source>
        <strain>168</strain>
    </source>
</reference>
<reference key="2">
    <citation type="journal article" date="1997" name="Nature">
        <title>The complete genome sequence of the Gram-positive bacterium Bacillus subtilis.</title>
        <authorList>
            <person name="Kunst F."/>
            <person name="Ogasawara N."/>
            <person name="Moszer I."/>
            <person name="Albertini A.M."/>
            <person name="Alloni G."/>
            <person name="Azevedo V."/>
            <person name="Bertero M.G."/>
            <person name="Bessieres P."/>
            <person name="Bolotin A."/>
            <person name="Borchert S."/>
            <person name="Borriss R."/>
            <person name="Boursier L."/>
            <person name="Brans A."/>
            <person name="Braun M."/>
            <person name="Brignell S.C."/>
            <person name="Bron S."/>
            <person name="Brouillet S."/>
            <person name="Bruschi C.V."/>
            <person name="Caldwell B."/>
            <person name="Capuano V."/>
            <person name="Carter N.M."/>
            <person name="Choi S.-K."/>
            <person name="Codani J.-J."/>
            <person name="Connerton I.F."/>
            <person name="Cummings N.J."/>
            <person name="Daniel R.A."/>
            <person name="Denizot F."/>
            <person name="Devine K.M."/>
            <person name="Duesterhoeft A."/>
            <person name="Ehrlich S.D."/>
            <person name="Emmerson P.T."/>
            <person name="Entian K.-D."/>
            <person name="Errington J."/>
            <person name="Fabret C."/>
            <person name="Ferrari E."/>
            <person name="Foulger D."/>
            <person name="Fritz C."/>
            <person name="Fujita M."/>
            <person name="Fujita Y."/>
            <person name="Fuma S."/>
            <person name="Galizzi A."/>
            <person name="Galleron N."/>
            <person name="Ghim S.-Y."/>
            <person name="Glaser P."/>
            <person name="Goffeau A."/>
            <person name="Golightly E.J."/>
            <person name="Grandi G."/>
            <person name="Guiseppi G."/>
            <person name="Guy B.J."/>
            <person name="Haga K."/>
            <person name="Haiech J."/>
            <person name="Harwood C.R."/>
            <person name="Henaut A."/>
            <person name="Hilbert H."/>
            <person name="Holsappel S."/>
            <person name="Hosono S."/>
            <person name="Hullo M.-F."/>
            <person name="Itaya M."/>
            <person name="Jones L.-M."/>
            <person name="Joris B."/>
            <person name="Karamata D."/>
            <person name="Kasahara Y."/>
            <person name="Klaerr-Blanchard M."/>
            <person name="Klein C."/>
            <person name="Kobayashi Y."/>
            <person name="Koetter P."/>
            <person name="Koningstein G."/>
            <person name="Krogh S."/>
            <person name="Kumano M."/>
            <person name="Kurita K."/>
            <person name="Lapidus A."/>
            <person name="Lardinois S."/>
            <person name="Lauber J."/>
            <person name="Lazarevic V."/>
            <person name="Lee S.-M."/>
            <person name="Levine A."/>
            <person name="Liu H."/>
            <person name="Masuda S."/>
            <person name="Mauel C."/>
            <person name="Medigue C."/>
            <person name="Medina N."/>
            <person name="Mellado R.P."/>
            <person name="Mizuno M."/>
            <person name="Moestl D."/>
            <person name="Nakai S."/>
            <person name="Noback M."/>
            <person name="Noone D."/>
            <person name="O'Reilly M."/>
            <person name="Ogawa K."/>
            <person name="Ogiwara A."/>
            <person name="Oudega B."/>
            <person name="Park S.-H."/>
            <person name="Parro V."/>
            <person name="Pohl T.M."/>
            <person name="Portetelle D."/>
            <person name="Porwollik S."/>
            <person name="Prescott A.M."/>
            <person name="Presecan E."/>
            <person name="Pujic P."/>
            <person name="Purnelle B."/>
            <person name="Rapoport G."/>
            <person name="Rey M."/>
            <person name="Reynolds S."/>
            <person name="Rieger M."/>
            <person name="Rivolta C."/>
            <person name="Rocha E."/>
            <person name="Roche B."/>
            <person name="Rose M."/>
            <person name="Sadaie Y."/>
            <person name="Sato T."/>
            <person name="Scanlan E."/>
            <person name="Schleich S."/>
            <person name="Schroeter R."/>
            <person name="Scoffone F."/>
            <person name="Sekiguchi J."/>
            <person name="Sekowska A."/>
            <person name="Seror S.J."/>
            <person name="Serror P."/>
            <person name="Shin B.-S."/>
            <person name="Soldo B."/>
            <person name="Sorokin A."/>
            <person name="Tacconi E."/>
            <person name="Takagi T."/>
            <person name="Takahashi H."/>
            <person name="Takemaru K."/>
            <person name="Takeuchi M."/>
            <person name="Tamakoshi A."/>
            <person name="Tanaka T."/>
            <person name="Terpstra P."/>
            <person name="Tognoni A."/>
            <person name="Tosato V."/>
            <person name="Uchiyama S."/>
            <person name="Vandenbol M."/>
            <person name="Vannier F."/>
            <person name="Vassarotti A."/>
            <person name="Viari A."/>
            <person name="Wambutt R."/>
            <person name="Wedler E."/>
            <person name="Wedler H."/>
            <person name="Weitzenegger T."/>
            <person name="Winters P."/>
            <person name="Wipat A."/>
            <person name="Yamamoto H."/>
            <person name="Yamane K."/>
            <person name="Yasumoto K."/>
            <person name="Yata K."/>
            <person name="Yoshida K."/>
            <person name="Yoshikawa H.-F."/>
            <person name="Zumstein E."/>
            <person name="Yoshikawa H."/>
            <person name="Danchin A."/>
        </authorList>
    </citation>
    <scope>NUCLEOTIDE SEQUENCE [LARGE SCALE GENOMIC DNA]</scope>
    <source>
        <strain>168</strain>
    </source>
</reference>
<comment type="sequence caution" evidence="4">
    <conflict type="erroneous initiation">
        <sequence resource="EMBL-CDS" id="AAC17863"/>
    </conflict>
</comment>
<proteinExistence type="inferred from homology"/>
<protein>
    <recommendedName>
        <fullName>Uncharacterized protein YojO</fullName>
    </recommendedName>
</protein>
<accession>O31849</accession>
<accession>C0SPB7</accession>
<accession>Q7BV92</accession>
<sequence>MKFIKFNDSTIDSFLFMMLTDLAKTLTKSEAVEVEYGVQSYYNPFEKKIYMSHFWKDRAAEDMEAGLKSDVYLRSVGTRYSSLHEFANFLNDIHRHLTFKSFAKQLFMLLEDIRIEECIKRERPGTKHVFAKRKDMYRKHFSTQLTLNLERSIFTDALFCAIYFKLTAESPLETLPSMREDIDLMRPFIEQQLLRVYEADSTRQVLKIVEDLMDGLEEVLDKDMLNTYFFLPELDYAKAAEQPLFEEEKKAPKLSDDITLPKQSDGDEDIHEEEMPTWHRETEAPSKSFLQFDIEHGAKSDLGKDASREGDDGDQALGSVQGSARQTKRKDYSKLEALESQKDQPNGAGMADGKENKYAFPIYKEPQPATSEEELSYKQQAKTIESYQKRLKQMIQKTLEHKKTLPRTDLHAGRLNNKLLRYFTERNPRLFYKKQEPSSEIDAVFTLLVDCSASMFDKMDETKRGIVLFHEALKSVAVPHQIVGFWEDTNDATEKSQPNYFNTVIPFQSSLRQDSGPAIMQLEPEEDNRDGYAIRQMTKKMLHRSEAQKFLIVFSDGEPAAFGYEQNGIVDTSEAVIEARKRGIEVINVFLSNSEIEESQMKTIQDMYGKFSIFVPDVDQLPDVLYPLLKKLLHKSIG</sequence>
<evidence type="ECO:0000255" key="1"/>
<evidence type="ECO:0000255" key="2">
    <source>
        <dbReference type="PROSITE-ProRule" id="PRU00219"/>
    </source>
</evidence>
<evidence type="ECO:0000256" key="3">
    <source>
        <dbReference type="SAM" id="MobiDB-lite"/>
    </source>
</evidence>
<evidence type="ECO:0000305" key="4"/>
<keyword id="KW-1185">Reference proteome</keyword>
<keyword id="KW-0732">Signal</keyword>
<name>YOJO_BACSU</name>